<proteinExistence type="inferred from homology"/>
<reference key="1">
    <citation type="journal article" date="2006" name="J. Bacteriol.">
        <title>Pathogenomic sequence analysis of Bacillus cereus and Bacillus thuringiensis isolates closely related to Bacillus anthracis.</title>
        <authorList>
            <person name="Han C.S."/>
            <person name="Xie G."/>
            <person name="Challacombe J.F."/>
            <person name="Altherr M.R."/>
            <person name="Bhotika S.S."/>
            <person name="Bruce D."/>
            <person name="Campbell C.S."/>
            <person name="Campbell M.L."/>
            <person name="Chen J."/>
            <person name="Chertkov O."/>
            <person name="Cleland C."/>
            <person name="Dimitrijevic M."/>
            <person name="Doggett N.A."/>
            <person name="Fawcett J.J."/>
            <person name="Glavina T."/>
            <person name="Goodwin L.A."/>
            <person name="Hill K.K."/>
            <person name="Hitchcock P."/>
            <person name="Jackson P.J."/>
            <person name="Keim P."/>
            <person name="Kewalramani A.R."/>
            <person name="Longmire J."/>
            <person name="Lucas S."/>
            <person name="Malfatti S."/>
            <person name="McMurry K."/>
            <person name="Meincke L.J."/>
            <person name="Misra M."/>
            <person name="Moseman B.L."/>
            <person name="Mundt M."/>
            <person name="Munk A.C."/>
            <person name="Okinaka R.T."/>
            <person name="Parson-Quintana B."/>
            <person name="Reilly L.P."/>
            <person name="Richardson P."/>
            <person name="Robinson D.L."/>
            <person name="Rubin E."/>
            <person name="Saunders E."/>
            <person name="Tapia R."/>
            <person name="Tesmer J.G."/>
            <person name="Thayer N."/>
            <person name="Thompson L.S."/>
            <person name="Tice H."/>
            <person name="Ticknor L.O."/>
            <person name="Wills P.L."/>
            <person name="Brettin T.S."/>
            <person name="Gilna P."/>
        </authorList>
    </citation>
    <scope>NUCLEOTIDE SEQUENCE [LARGE SCALE GENOMIC DNA]</scope>
    <source>
        <strain>ZK / E33L</strain>
    </source>
</reference>
<accession>Q633E0</accession>
<protein>
    <recommendedName>
        <fullName evidence="1">Small ribosomal subunit protein uS4</fullName>
    </recommendedName>
    <alternativeName>
        <fullName evidence="3">30S ribosomal protein S4</fullName>
    </alternativeName>
</protein>
<sequence>MARYTGPAWKLSRRLGISLSGTGKELEKRPYAPGPHGPNQRKKLSEYGLQLQEKQKLRHMYGMTERQFRRTFDQAGKMPGKHGENFMILLEARLDNLVYRMGLARTRRAARQLVNHGHIMVDGARVDIPSYRVKPGQTISVREKSNNLVVVKEAIEVNNFVPEYLTFDADKLEATYTRHAERAELPAEINEALIVEFYSR</sequence>
<name>RS4_BACCZ</name>
<dbReference type="EMBL" id="CP000001">
    <property type="protein sequence ID" value="AAU15871.1"/>
    <property type="molecule type" value="Genomic_DNA"/>
</dbReference>
<dbReference type="RefSeq" id="WP_000135311.1">
    <property type="nucleotide sequence ID" value="NZ_CP009968.1"/>
</dbReference>
<dbReference type="SMR" id="Q633E0"/>
<dbReference type="GeneID" id="83638371"/>
<dbReference type="KEGG" id="bcz:BCE33L4399"/>
<dbReference type="PATRIC" id="fig|288681.22.peg.972"/>
<dbReference type="Proteomes" id="UP000002612">
    <property type="component" value="Chromosome"/>
</dbReference>
<dbReference type="GO" id="GO:0015935">
    <property type="term" value="C:small ribosomal subunit"/>
    <property type="evidence" value="ECO:0007669"/>
    <property type="project" value="InterPro"/>
</dbReference>
<dbReference type="GO" id="GO:0019843">
    <property type="term" value="F:rRNA binding"/>
    <property type="evidence" value="ECO:0007669"/>
    <property type="project" value="UniProtKB-UniRule"/>
</dbReference>
<dbReference type="GO" id="GO:0003735">
    <property type="term" value="F:structural constituent of ribosome"/>
    <property type="evidence" value="ECO:0007669"/>
    <property type="project" value="InterPro"/>
</dbReference>
<dbReference type="GO" id="GO:0042274">
    <property type="term" value="P:ribosomal small subunit biogenesis"/>
    <property type="evidence" value="ECO:0007669"/>
    <property type="project" value="TreeGrafter"/>
</dbReference>
<dbReference type="GO" id="GO:0006412">
    <property type="term" value="P:translation"/>
    <property type="evidence" value="ECO:0007669"/>
    <property type="project" value="UniProtKB-UniRule"/>
</dbReference>
<dbReference type="CDD" id="cd00165">
    <property type="entry name" value="S4"/>
    <property type="match status" value="1"/>
</dbReference>
<dbReference type="FunFam" id="1.10.1050.10:FF:000001">
    <property type="entry name" value="30S ribosomal protein S4"/>
    <property type="match status" value="1"/>
</dbReference>
<dbReference type="FunFam" id="3.10.290.10:FF:000001">
    <property type="entry name" value="30S ribosomal protein S4"/>
    <property type="match status" value="1"/>
</dbReference>
<dbReference type="Gene3D" id="1.10.1050.10">
    <property type="entry name" value="Ribosomal Protein S4 Delta 41, Chain A, domain 1"/>
    <property type="match status" value="1"/>
</dbReference>
<dbReference type="Gene3D" id="3.10.290.10">
    <property type="entry name" value="RNA-binding S4 domain"/>
    <property type="match status" value="1"/>
</dbReference>
<dbReference type="HAMAP" id="MF_01306_B">
    <property type="entry name" value="Ribosomal_uS4_B"/>
    <property type="match status" value="1"/>
</dbReference>
<dbReference type="InterPro" id="IPR022801">
    <property type="entry name" value="Ribosomal_uS4"/>
</dbReference>
<dbReference type="InterPro" id="IPR005709">
    <property type="entry name" value="Ribosomal_uS4_bac-type"/>
</dbReference>
<dbReference type="InterPro" id="IPR018079">
    <property type="entry name" value="Ribosomal_uS4_CS"/>
</dbReference>
<dbReference type="InterPro" id="IPR001912">
    <property type="entry name" value="Ribosomal_uS4_N"/>
</dbReference>
<dbReference type="InterPro" id="IPR002942">
    <property type="entry name" value="S4_RNA-bd"/>
</dbReference>
<dbReference type="InterPro" id="IPR036986">
    <property type="entry name" value="S4_RNA-bd_sf"/>
</dbReference>
<dbReference type="NCBIfam" id="NF003717">
    <property type="entry name" value="PRK05327.1"/>
    <property type="match status" value="1"/>
</dbReference>
<dbReference type="NCBIfam" id="TIGR01017">
    <property type="entry name" value="rpsD_bact"/>
    <property type="match status" value="1"/>
</dbReference>
<dbReference type="PANTHER" id="PTHR11831">
    <property type="entry name" value="30S 40S RIBOSOMAL PROTEIN"/>
    <property type="match status" value="1"/>
</dbReference>
<dbReference type="PANTHER" id="PTHR11831:SF4">
    <property type="entry name" value="SMALL RIBOSOMAL SUBUNIT PROTEIN US4M"/>
    <property type="match status" value="1"/>
</dbReference>
<dbReference type="Pfam" id="PF00163">
    <property type="entry name" value="Ribosomal_S4"/>
    <property type="match status" value="1"/>
</dbReference>
<dbReference type="Pfam" id="PF01479">
    <property type="entry name" value="S4"/>
    <property type="match status" value="1"/>
</dbReference>
<dbReference type="SMART" id="SM01390">
    <property type="entry name" value="Ribosomal_S4"/>
    <property type="match status" value="1"/>
</dbReference>
<dbReference type="SMART" id="SM00363">
    <property type="entry name" value="S4"/>
    <property type="match status" value="1"/>
</dbReference>
<dbReference type="SUPFAM" id="SSF55174">
    <property type="entry name" value="Alpha-L RNA-binding motif"/>
    <property type="match status" value="1"/>
</dbReference>
<dbReference type="PROSITE" id="PS00632">
    <property type="entry name" value="RIBOSOMAL_S4"/>
    <property type="match status" value="1"/>
</dbReference>
<dbReference type="PROSITE" id="PS50889">
    <property type="entry name" value="S4"/>
    <property type="match status" value="1"/>
</dbReference>
<feature type="chain" id="PRO_0000132333" description="Small ribosomal subunit protein uS4">
    <location>
        <begin position="1"/>
        <end position="200"/>
    </location>
</feature>
<feature type="domain" description="S4 RNA-binding" evidence="1">
    <location>
        <begin position="92"/>
        <end position="152"/>
    </location>
</feature>
<feature type="region of interest" description="Disordered" evidence="2">
    <location>
        <begin position="22"/>
        <end position="42"/>
    </location>
</feature>
<evidence type="ECO:0000255" key="1">
    <source>
        <dbReference type="HAMAP-Rule" id="MF_01306"/>
    </source>
</evidence>
<evidence type="ECO:0000256" key="2">
    <source>
        <dbReference type="SAM" id="MobiDB-lite"/>
    </source>
</evidence>
<evidence type="ECO:0000305" key="3"/>
<keyword id="KW-0687">Ribonucleoprotein</keyword>
<keyword id="KW-0689">Ribosomal protein</keyword>
<keyword id="KW-0694">RNA-binding</keyword>
<keyword id="KW-0699">rRNA-binding</keyword>
<gene>
    <name evidence="1" type="primary">rpsD</name>
    <name type="ordered locus">BCE33L4399</name>
</gene>
<organism>
    <name type="scientific">Bacillus cereus (strain ZK / E33L)</name>
    <dbReference type="NCBI Taxonomy" id="288681"/>
    <lineage>
        <taxon>Bacteria</taxon>
        <taxon>Bacillati</taxon>
        <taxon>Bacillota</taxon>
        <taxon>Bacilli</taxon>
        <taxon>Bacillales</taxon>
        <taxon>Bacillaceae</taxon>
        <taxon>Bacillus</taxon>
        <taxon>Bacillus cereus group</taxon>
    </lineage>
</organism>
<comment type="function">
    <text evidence="1">One of the primary rRNA binding proteins, it binds directly to 16S rRNA where it nucleates assembly of the body of the 30S subunit.</text>
</comment>
<comment type="function">
    <text evidence="1">With S5 and S12 plays an important role in translational accuracy.</text>
</comment>
<comment type="subunit">
    <text evidence="1">Part of the 30S ribosomal subunit. Contacts protein S5. The interaction surface between S4 and S5 is involved in control of translational fidelity.</text>
</comment>
<comment type="similarity">
    <text evidence="1">Belongs to the universal ribosomal protein uS4 family.</text>
</comment>